<gene>
    <name evidence="1" type="primary">cbiD</name>
    <name type="ordered locus">CLD_3625</name>
</gene>
<sequence>MLDLYVNCDGKKLRCGYTTGSCAAAAAKAAAIALFYNKKLKEINIDTPKGIELTIPIEKIVEDESFVECAVIKDGGDDVDITHGIEIWARAEKKSSGYTLKGGKGVGVVCGEGLYVPKGEPAINPVPRSMIEKEVRSVIPRDSGVEITIFVPKGEEIAKKTFNPRLNIIGGISILGTTGIVMPMSEDALKASIELEINQKTCHGEKELILLFGNMGEKMAKELNLKENNMVIMSNYVGFALNCCMARKLEKVTIVGHIGKISKIASGCFNTHSRICDTRLETLALELALMGYDKDLVTKIYNQKTTEGAVNLLGEGYEKLYKNLGKKIIRKIEQYTYDSIKADIVMYSMGRGILYSSIE</sequence>
<accession>B1IHE5</accession>
<feature type="chain" id="PRO_1000133735" description="Cobalt-precorrin-5B C(1)-methyltransferase">
    <location>
        <begin position="1"/>
        <end position="359"/>
    </location>
</feature>
<organism>
    <name type="scientific">Clostridium botulinum (strain Okra / Type B1)</name>
    <dbReference type="NCBI Taxonomy" id="498213"/>
    <lineage>
        <taxon>Bacteria</taxon>
        <taxon>Bacillati</taxon>
        <taxon>Bacillota</taxon>
        <taxon>Clostridia</taxon>
        <taxon>Eubacteriales</taxon>
        <taxon>Clostridiaceae</taxon>
        <taxon>Clostridium</taxon>
    </lineage>
</organism>
<comment type="function">
    <text evidence="1">Catalyzes the methylation of C-1 in cobalt-precorrin-5B to form cobalt-precorrin-6A.</text>
</comment>
<comment type="catalytic activity">
    <reaction evidence="1">
        <text>Co-precorrin-5B + S-adenosyl-L-methionine = Co-precorrin-6A + S-adenosyl-L-homocysteine</text>
        <dbReference type="Rhea" id="RHEA:26285"/>
        <dbReference type="ChEBI" id="CHEBI:57856"/>
        <dbReference type="ChEBI" id="CHEBI:59789"/>
        <dbReference type="ChEBI" id="CHEBI:60063"/>
        <dbReference type="ChEBI" id="CHEBI:60064"/>
        <dbReference type="EC" id="2.1.1.195"/>
    </reaction>
</comment>
<comment type="pathway">
    <text evidence="1">Cofactor biosynthesis; adenosylcobalamin biosynthesis; cob(II)yrinate a,c-diamide from sirohydrochlorin (anaerobic route): step 6/10.</text>
</comment>
<comment type="similarity">
    <text evidence="1">Belongs to the CbiD family.</text>
</comment>
<protein>
    <recommendedName>
        <fullName evidence="1">Cobalt-precorrin-5B C(1)-methyltransferase</fullName>
        <ecNumber evidence="1">2.1.1.195</ecNumber>
    </recommendedName>
    <alternativeName>
        <fullName evidence="1">Cobalt-precorrin-6A synthase</fullName>
    </alternativeName>
</protein>
<keyword id="KW-0169">Cobalamin biosynthesis</keyword>
<keyword id="KW-0489">Methyltransferase</keyword>
<keyword id="KW-0949">S-adenosyl-L-methionine</keyword>
<keyword id="KW-0808">Transferase</keyword>
<proteinExistence type="inferred from homology"/>
<dbReference type="EC" id="2.1.1.195" evidence="1"/>
<dbReference type="EMBL" id="CP000939">
    <property type="protein sequence ID" value="ACA44183.1"/>
    <property type="molecule type" value="Genomic_DNA"/>
</dbReference>
<dbReference type="RefSeq" id="WP_015957589.1">
    <property type="nucleotide sequence ID" value="NC_010516.1"/>
</dbReference>
<dbReference type="SMR" id="B1IHE5"/>
<dbReference type="KEGG" id="cbb:CLD_3625"/>
<dbReference type="HOGENOM" id="CLU_041273_1_0_9"/>
<dbReference type="UniPathway" id="UPA00148">
    <property type="reaction ID" value="UER00227"/>
</dbReference>
<dbReference type="Proteomes" id="UP000008541">
    <property type="component" value="Chromosome"/>
</dbReference>
<dbReference type="GO" id="GO:0043780">
    <property type="term" value="F:cobalt-precorrin-5B C1-methyltransferase activity"/>
    <property type="evidence" value="ECO:0007669"/>
    <property type="project" value="RHEA"/>
</dbReference>
<dbReference type="GO" id="GO:0019251">
    <property type="term" value="P:anaerobic cobalamin biosynthetic process"/>
    <property type="evidence" value="ECO:0007669"/>
    <property type="project" value="UniProtKB-UniRule"/>
</dbReference>
<dbReference type="GO" id="GO:0032259">
    <property type="term" value="P:methylation"/>
    <property type="evidence" value="ECO:0007669"/>
    <property type="project" value="UniProtKB-KW"/>
</dbReference>
<dbReference type="Gene3D" id="3.30.2110.10">
    <property type="entry name" value="CbiD-like"/>
    <property type="match status" value="1"/>
</dbReference>
<dbReference type="HAMAP" id="MF_00787">
    <property type="entry name" value="CbiD"/>
    <property type="match status" value="1"/>
</dbReference>
<dbReference type="InterPro" id="IPR002748">
    <property type="entry name" value="CbiD"/>
</dbReference>
<dbReference type="InterPro" id="IPR036074">
    <property type="entry name" value="CbiD_sf"/>
</dbReference>
<dbReference type="NCBIfam" id="TIGR00312">
    <property type="entry name" value="cbiD"/>
    <property type="match status" value="1"/>
</dbReference>
<dbReference type="PANTHER" id="PTHR35863">
    <property type="entry name" value="COBALT-PRECORRIN-5B C(1)-METHYLTRANSFERASE"/>
    <property type="match status" value="1"/>
</dbReference>
<dbReference type="PANTHER" id="PTHR35863:SF1">
    <property type="entry name" value="COBALT-PRECORRIN-5B C(1)-METHYLTRANSFERASE"/>
    <property type="match status" value="1"/>
</dbReference>
<dbReference type="Pfam" id="PF01888">
    <property type="entry name" value="CbiD"/>
    <property type="match status" value="1"/>
</dbReference>
<dbReference type="PIRSF" id="PIRSF026782">
    <property type="entry name" value="CbiD"/>
    <property type="match status" value="1"/>
</dbReference>
<dbReference type="SUPFAM" id="SSF111342">
    <property type="entry name" value="CbiD-like"/>
    <property type="match status" value="1"/>
</dbReference>
<reference key="1">
    <citation type="journal article" date="2007" name="PLoS ONE">
        <title>Analysis of the neurotoxin complex genes in Clostridium botulinum A1-A4 and B1 strains: BoNT/A3, /Ba4 and /B1 clusters are located within plasmids.</title>
        <authorList>
            <person name="Smith T.J."/>
            <person name="Hill K.K."/>
            <person name="Foley B.T."/>
            <person name="Detter J.C."/>
            <person name="Munk A.C."/>
            <person name="Bruce D.C."/>
            <person name="Doggett N.A."/>
            <person name="Smith L.A."/>
            <person name="Marks J.D."/>
            <person name="Xie G."/>
            <person name="Brettin T.S."/>
        </authorList>
    </citation>
    <scope>NUCLEOTIDE SEQUENCE [LARGE SCALE GENOMIC DNA]</scope>
    <source>
        <strain>Okra / Type B1</strain>
    </source>
</reference>
<evidence type="ECO:0000255" key="1">
    <source>
        <dbReference type="HAMAP-Rule" id="MF_00787"/>
    </source>
</evidence>
<name>CBID_CLOBK</name>